<organism>
    <name type="scientific">Kineococcus radiotolerans (strain ATCC BAA-149 / DSM 14245 / SRS30216)</name>
    <dbReference type="NCBI Taxonomy" id="266940"/>
    <lineage>
        <taxon>Bacteria</taxon>
        <taxon>Bacillati</taxon>
        <taxon>Actinomycetota</taxon>
        <taxon>Actinomycetes</taxon>
        <taxon>Kineosporiales</taxon>
        <taxon>Kineosporiaceae</taxon>
        <taxon>Kineococcus</taxon>
    </lineage>
</organism>
<feature type="chain" id="PRO_1000076591" description="Phosphoglycerate kinase">
    <location>
        <begin position="1"/>
        <end position="412"/>
    </location>
</feature>
<feature type="binding site" evidence="1">
    <location>
        <begin position="24"/>
        <end position="26"/>
    </location>
    <ligand>
        <name>substrate</name>
    </ligand>
</feature>
<feature type="binding site" evidence="1">
    <location>
        <position position="47"/>
    </location>
    <ligand>
        <name>substrate</name>
    </ligand>
</feature>
<feature type="binding site" evidence="1">
    <location>
        <begin position="70"/>
        <end position="73"/>
    </location>
    <ligand>
        <name>substrate</name>
    </ligand>
</feature>
<feature type="binding site" evidence="1">
    <location>
        <position position="130"/>
    </location>
    <ligand>
        <name>substrate</name>
    </ligand>
</feature>
<feature type="binding site" evidence="1">
    <location>
        <position position="167"/>
    </location>
    <ligand>
        <name>substrate</name>
    </ligand>
</feature>
<feature type="binding site" evidence="1">
    <location>
        <position position="217"/>
    </location>
    <ligand>
        <name>ATP</name>
        <dbReference type="ChEBI" id="CHEBI:30616"/>
    </ligand>
</feature>
<feature type="binding site" evidence="1">
    <location>
        <position position="312"/>
    </location>
    <ligand>
        <name>ATP</name>
        <dbReference type="ChEBI" id="CHEBI:30616"/>
    </ligand>
</feature>
<feature type="binding site" evidence="1">
    <location>
        <position position="343"/>
    </location>
    <ligand>
        <name>ATP</name>
        <dbReference type="ChEBI" id="CHEBI:30616"/>
    </ligand>
</feature>
<feature type="binding site" evidence="1">
    <location>
        <begin position="369"/>
        <end position="372"/>
    </location>
    <ligand>
        <name>ATP</name>
        <dbReference type="ChEBI" id="CHEBI:30616"/>
    </ligand>
</feature>
<reference key="1">
    <citation type="journal article" date="2008" name="PLoS ONE">
        <title>Survival in nuclear waste, extreme resistance, and potential applications gleaned from the genome sequence of Kineococcus radiotolerans SRS30216.</title>
        <authorList>
            <person name="Bagwell C.E."/>
            <person name="Bhat S."/>
            <person name="Hawkins G.M."/>
            <person name="Smith B.W."/>
            <person name="Biswas T."/>
            <person name="Hoover T.R."/>
            <person name="Saunders E."/>
            <person name="Han C.S."/>
            <person name="Tsodikov O.V."/>
            <person name="Shimkets L.J."/>
        </authorList>
    </citation>
    <scope>NUCLEOTIDE SEQUENCE [LARGE SCALE GENOMIC DNA]</scope>
    <source>
        <strain>ATCC BAA-149 / DSM 14245 / SRS30216</strain>
    </source>
</reference>
<proteinExistence type="inferred from homology"/>
<accession>A6WC55</accession>
<comment type="catalytic activity">
    <reaction evidence="1">
        <text>(2R)-3-phosphoglycerate + ATP = (2R)-3-phospho-glyceroyl phosphate + ADP</text>
        <dbReference type="Rhea" id="RHEA:14801"/>
        <dbReference type="ChEBI" id="CHEBI:30616"/>
        <dbReference type="ChEBI" id="CHEBI:57604"/>
        <dbReference type="ChEBI" id="CHEBI:58272"/>
        <dbReference type="ChEBI" id="CHEBI:456216"/>
        <dbReference type="EC" id="2.7.2.3"/>
    </reaction>
</comment>
<comment type="pathway">
    <text evidence="1">Carbohydrate degradation; glycolysis; pyruvate from D-glyceraldehyde 3-phosphate: step 2/5.</text>
</comment>
<comment type="subunit">
    <text evidence="1">Monomer.</text>
</comment>
<comment type="subcellular location">
    <subcellularLocation>
        <location evidence="1">Cytoplasm</location>
    </subcellularLocation>
</comment>
<comment type="similarity">
    <text evidence="1">Belongs to the phosphoglycerate kinase family.</text>
</comment>
<keyword id="KW-0067">ATP-binding</keyword>
<keyword id="KW-0963">Cytoplasm</keyword>
<keyword id="KW-0324">Glycolysis</keyword>
<keyword id="KW-0418">Kinase</keyword>
<keyword id="KW-0547">Nucleotide-binding</keyword>
<keyword id="KW-1185">Reference proteome</keyword>
<keyword id="KW-0808">Transferase</keyword>
<sequence length="412" mass="43035">MKTLDDLETQLGGFAGRRVLVRSDLNVPLDHDRRDGAGQPVITDDGRLRASVPTLRRLLDAGARVVVTAHLGRPKGAPEAKYSLAPVHARLAELLPGVEVGFCPVTVGAQATAAVDALADGELLLLENIRFNAGETSKDDEEREAFADELAALADAFVSDGFGAVHRKHASVYDVALRLPHAAGGLVATEVEVLQRLTAHPERPYAVVLGGSKVSDKLGVIDNLLGSLLGEGDRLLVGGGMVFTFLKAQGYEVGKSLLETDQLDRVAGYVRTAREKGVELVLPTDVVAATAFAADAEHDVVAVDAIPADRLGLDIGPDSGAAFAARLADARTVFWNGPMGVFEMEPYSHGTRAVAQALVDGGAFSVVGGGDSAAAVRTLGFADERFGHISTGGGASLEYLEGKHLPGLDVLS</sequence>
<protein>
    <recommendedName>
        <fullName evidence="1">Phosphoglycerate kinase</fullName>
        <ecNumber evidence="1">2.7.2.3</ecNumber>
    </recommendedName>
</protein>
<dbReference type="EC" id="2.7.2.3" evidence="1"/>
<dbReference type="EMBL" id="CP000750">
    <property type="protein sequence ID" value="ABS04394.1"/>
    <property type="molecule type" value="Genomic_DNA"/>
</dbReference>
<dbReference type="RefSeq" id="WP_012087360.1">
    <property type="nucleotide sequence ID" value="NC_009664.2"/>
</dbReference>
<dbReference type="SMR" id="A6WC55"/>
<dbReference type="STRING" id="266940.Krad_2930"/>
<dbReference type="KEGG" id="kra:Krad_2930"/>
<dbReference type="eggNOG" id="COG0126">
    <property type="taxonomic scope" value="Bacteria"/>
</dbReference>
<dbReference type="HOGENOM" id="CLU_025427_0_2_11"/>
<dbReference type="OrthoDB" id="9808460at2"/>
<dbReference type="UniPathway" id="UPA00109">
    <property type="reaction ID" value="UER00185"/>
</dbReference>
<dbReference type="Proteomes" id="UP000001116">
    <property type="component" value="Chromosome"/>
</dbReference>
<dbReference type="GO" id="GO:0005829">
    <property type="term" value="C:cytosol"/>
    <property type="evidence" value="ECO:0007669"/>
    <property type="project" value="TreeGrafter"/>
</dbReference>
<dbReference type="GO" id="GO:0043531">
    <property type="term" value="F:ADP binding"/>
    <property type="evidence" value="ECO:0007669"/>
    <property type="project" value="TreeGrafter"/>
</dbReference>
<dbReference type="GO" id="GO:0005524">
    <property type="term" value="F:ATP binding"/>
    <property type="evidence" value="ECO:0007669"/>
    <property type="project" value="UniProtKB-KW"/>
</dbReference>
<dbReference type="GO" id="GO:0004618">
    <property type="term" value="F:phosphoglycerate kinase activity"/>
    <property type="evidence" value="ECO:0007669"/>
    <property type="project" value="UniProtKB-UniRule"/>
</dbReference>
<dbReference type="GO" id="GO:0006094">
    <property type="term" value="P:gluconeogenesis"/>
    <property type="evidence" value="ECO:0007669"/>
    <property type="project" value="TreeGrafter"/>
</dbReference>
<dbReference type="GO" id="GO:0006096">
    <property type="term" value="P:glycolytic process"/>
    <property type="evidence" value="ECO:0007669"/>
    <property type="project" value="UniProtKB-UniRule"/>
</dbReference>
<dbReference type="FunFam" id="3.40.50.1260:FF:000006">
    <property type="entry name" value="Phosphoglycerate kinase"/>
    <property type="match status" value="1"/>
</dbReference>
<dbReference type="FunFam" id="3.40.50.1260:FF:000031">
    <property type="entry name" value="Phosphoglycerate kinase 1"/>
    <property type="match status" value="1"/>
</dbReference>
<dbReference type="Gene3D" id="3.40.50.1260">
    <property type="entry name" value="Phosphoglycerate kinase, N-terminal domain"/>
    <property type="match status" value="2"/>
</dbReference>
<dbReference type="HAMAP" id="MF_00145">
    <property type="entry name" value="Phosphoglyc_kinase"/>
    <property type="match status" value="1"/>
</dbReference>
<dbReference type="InterPro" id="IPR001576">
    <property type="entry name" value="Phosphoglycerate_kinase"/>
</dbReference>
<dbReference type="InterPro" id="IPR015911">
    <property type="entry name" value="Phosphoglycerate_kinase_CS"/>
</dbReference>
<dbReference type="InterPro" id="IPR015824">
    <property type="entry name" value="Phosphoglycerate_kinase_N"/>
</dbReference>
<dbReference type="InterPro" id="IPR036043">
    <property type="entry name" value="Phosphoglycerate_kinase_sf"/>
</dbReference>
<dbReference type="PANTHER" id="PTHR11406">
    <property type="entry name" value="PHOSPHOGLYCERATE KINASE"/>
    <property type="match status" value="1"/>
</dbReference>
<dbReference type="PANTHER" id="PTHR11406:SF23">
    <property type="entry name" value="PHOSPHOGLYCERATE KINASE 1, CHLOROPLASTIC-RELATED"/>
    <property type="match status" value="1"/>
</dbReference>
<dbReference type="Pfam" id="PF00162">
    <property type="entry name" value="PGK"/>
    <property type="match status" value="1"/>
</dbReference>
<dbReference type="PIRSF" id="PIRSF000724">
    <property type="entry name" value="Pgk"/>
    <property type="match status" value="1"/>
</dbReference>
<dbReference type="PRINTS" id="PR00477">
    <property type="entry name" value="PHGLYCKINASE"/>
</dbReference>
<dbReference type="SUPFAM" id="SSF53748">
    <property type="entry name" value="Phosphoglycerate kinase"/>
    <property type="match status" value="1"/>
</dbReference>
<dbReference type="PROSITE" id="PS00111">
    <property type="entry name" value="PGLYCERATE_KINASE"/>
    <property type="match status" value="1"/>
</dbReference>
<gene>
    <name evidence="1" type="primary">pgk</name>
    <name type="ordered locus">Krad_2930</name>
</gene>
<evidence type="ECO:0000255" key="1">
    <source>
        <dbReference type="HAMAP-Rule" id="MF_00145"/>
    </source>
</evidence>
<name>PGK_KINRD</name>